<protein>
    <recommendedName>
        <fullName>Small kinetochore-associated protein</fullName>
        <shortName>SKAP</shortName>
    </recommendedName>
    <alternativeName>
        <fullName>Kinetochore-localized astrin-binding protein</fullName>
        <shortName>Kinastrin</shortName>
    </alternativeName>
    <alternativeName>
        <fullName>Kinetochore-localized astrin/SPAG5-binding protein</fullName>
    </alternativeName>
    <alternativeName>
        <fullName>TRAF4-associated factor 1</fullName>
    </alternativeName>
</protein>
<proteinExistence type="evidence at transcript level"/>
<evidence type="ECO:0000250" key="1">
    <source>
        <dbReference type="UniProtKB" id="Q9Y448"/>
    </source>
</evidence>
<evidence type="ECO:0000255" key="2"/>
<evidence type="ECO:0000256" key="3">
    <source>
        <dbReference type="SAM" id="MobiDB-lite"/>
    </source>
</evidence>
<comment type="function">
    <text evidence="1">Essential component of the mitotic spindle required for faithful chromosome segregation and progression into anaphase. Promotes the metaphase-to-anaphase transition and is required for chromosome alignment, normal timing of sister chromatid segregation, and maintenance of spindle pole architecture. The astrin (SPAG5)-kinastrin (SKAP) complex promotes stable microtubule-kinetochore attachments. Required for kinetochore oscillations and dynamics of microtubule plus-ends during live cell mitosis, possibly by forming a link between spindle microtubule plus-ends and mitotic chromosomes to achieve faithful cell division.</text>
</comment>
<comment type="subunit">
    <text evidence="1">Part of an astrin (SPAG5)-kinastrin (SKAP) complex containing KNSTRN, SPAG5, PLK1, DYNLL1 and SGO2 (By similarity). Interacts with SPAG5 (By similarity). Directly binds to microtubules, although at relatively low affinity (By similarity). Interacts with CENPE; this interaction greatly favors microtubule-binding (By similarity). Interacts with DSN1/MIS13; leading to localization to kinetochores (By similarity). Interacts with MAPRE1/EB1; leading to localization to the microtubule plus ends (By similarity). Interacts with PRPF19 (By similarity). Interacts with DYNLL1 (By similarity). Interacts with MAP4 (By similarity).</text>
</comment>
<comment type="subcellular location">
    <subcellularLocation>
        <location evidence="1">Nucleus</location>
    </subcellularLocation>
    <subcellularLocation>
        <location evidence="1">Chromosome</location>
        <location evidence="1">Centromere</location>
        <location evidence="1">Kinetochore</location>
    </subcellularLocation>
    <subcellularLocation>
        <location evidence="1">Cytoplasm</location>
        <location evidence="1">Cytoskeleton</location>
        <location evidence="1">Spindle pole</location>
    </subcellularLocation>
    <subcellularLocation>
        <location evidence="1">Cytoplasm</location>
        <location evidence="1">Cytoskeleton</location>
        <location evidence="1">Microtubule organizing center</location>
    </subcellularLocation>
    <text evidence="1">Colocalizes with microtubules around centrosomes in prophase and with the mitotic spindle at prometaphase and metaphase. From late prometaphase to anaphase, is highly concentrated on kinetochores. Located at the kinetochore-microtubule interface. The astrin (SPAG5)-kinastrin (SKAP) complex localizes to the microtubule plus ends.</text>
</comment>
<comment type="domain">
    <text evidence="1">The coiled coil regions mediate binding to kinetochores.</text>
</comment>
<dbReference type="EMBL" id="BC079438">
    <property type="protein sequence ID" value="AAH79438.1"/>
    <property type="molecule type" value="mRNA"/>
</dbReference>
<dbReference type="RefSeq" id="NP_001004264.1">
    <property type="nucleotide sequence ID" value="NM_001004264.1"/>
</dbReference>
<dbReference type="SMR" id="Q6AXN6"/>
<dbReference type="FunCoup" id="Q6AXN6">
    <property type="interactions" value="319"/>
</dbReference>
<dbReference type="STRING" id="10116.ENSRNOP00000012454"/>
<dbReference type="iPTMnet" id="Q6AXN6"/>
<dbReference type="PhosphoSitePlus" id="Q6AXN6"/>
<dbReference type="PaxDb" id="10116-ENSRNOP00000012454"/>
<dbReference type="GeneID" id="311325"/>
<dbReference type="KEGG" id="rno:311325"/>
<dbReference type="UCSC" id="RGD:1303240">
    <property type="organism name" value="rat"/>
</dbReference>
<dbReference type="AGR" id="RGD:1303240"/>
<dbReference type="CTD" id="90417"/>
<dbReference type="RGD" id="1303240">
    <property type="gene designation" value="Knstrn"/>
</dbReference>
<dbReference type="VEuPathDB" id="HostDB:ENSRNOG00000009334"/>
<dbReference type="eggNOG" id="ENOG502S60X">
    <property type="taxonomic scope" value="Eukaryota"/>
</dbReference>
<dbReference type="HOGENOM" id="CLU_076625_0_0_1"/>
<dbReference type="InParanoid" id="Q6AXN6"/>
<dbReference type="OrthoDB" id="86951at9989"/>
<dbReference type="PhylomeDB" id="Q6AXN6"/>
<dbReference type="TreeFam" id="TF336302"/>
<dbReference type="PRO" id="PR:Q6AXN6"/>
<dbReference type="Proteomes" id="UP000002494">
    <property type="component" value="Chromosome 3"/>
</dbReference>
<dbReference type="Bgee" id="ENSRNOG00000009334">
    <property type="expression patterns" value="Expressed in testis and 16 other cell types or tissues"/>
</dbReference>
<dbReference type="GO" id="GO:0034451">
    <property type="term" value="C:centriolar satellite"/>
    <property type="evidence" value="ECO:0000318"/>
    <property type="project" value="GO_Central"/>
</dbReference>
<dbReference type="GO" id="GO:0005737">
    <property type="term" value="C:cytoplasm"/>
    <property type="evidence" value="ECO:0007669"/>
    <property type="project" value="UniProtKB-KW"/>
</dbReference>
<dbReference type="GO" id="GO:0000776">
    <property type="term" value="C:kinetochore"/>
    <property type="evidence" value="ECO:0000250"/>
    <property type="project" value="UniProtKB"/>
</dbReference>
<dbReference type="GO" id="GO:0005815">
    <property type="term" value="C:microtubule organizing center"/>
    <property type="evidence" value="ECO:0000266"/>
    <property type="project" value="RGD"/>
</dbReference>
<dbReference type="GO" id="GO:0035371">
    <property type="term" value="C:microtubule plus-end"/>
    <property type="evidence" value="ECO:0000250"/>
    <property type="project" value="UniProtKB"/>
</dbReference>
<dbReference type="GO" id="GO:0072686">
    <property type="term" value="C:mitotic spindle"/>
    <property type="evidence" value="ECO:0000250"/>
    <property type="project" value="UniProtKB"/>
</dbReference>
<dbReference type="GO" id="GO:0005634">
    <property type="term" value="C:nucleus"/>
    <property type="evidence" value="ECO:0007669"/>
    <property type="project" value="UniProtKB-SubCell"/>
</dbReference>
<dbReference type="GO" id="GO:0005886">
    <property type="term" value="C:plasma membrane"/>
    <property type="evidence" value="ECO:0007669"/>
    <property type="project" value="Ensembl"/>
</dbReference>
<dbReference type="GO" id="GO:0001726">
    <property type="term" value="C:ruffle"/>
    <property type="evidence" value="ECO:0000266"/>
    <property type="project" value="RGD"/>
</dbReference>
<dbReference type="GO" id="GO:0000922">
    <property type="term" value="C:spindle pole"/>
    <property type="evidence" value="ECO:0007669"/>
    <property type="project" value="UniProtKB-SubCell"/>
</dbReference>
<dbReference type="GO" id="GO:0051010">
    <property type="term" value="F:microtubule plus-end binding"/>
    <property type="evidence" value="ECO:0000266"/>
    <property type="project" value="RGD"/>
</dbReference>
<dbReference type="GO" id="GO:0042803">
    <property type="term" value="F:protein homodimerization activity"/>
    <property type="evidence" value="ECO:0000266"/>
    <property type="project" value="RGD"/>
</dbReference>
<dbReference type="GO" id="GO:0051301">
    <property type="term" value="P:cell division"/>
    <property type="evidence" value="ECO:0007669"/>
    <property type="project" value="UniProtKB-KW"/>
</dbReference>
<dbReference type="GO" id="GO:0016477">
    <property type="term" value="P:cell migration"/>
    <property type="evidence" value="ECO:0000266"/>
    <property type="project" value="RGD"/>
</dbReference>
<dbReference type="GO" id="GO:0071364">
    <property type="term" value="P:cellular response to epidermal growth factor stimulus"/>
    <property type="evidence" value="ECO:0000266"/>
    <property type="project" value="RGD"/>
</dbReference>
<dbReference type="GO" id="GO:0007059">
    <property type="term" value="P:chromosome segregation"/>
    <property type="evidence" value="ECO:0000250"/>
    <property type="project" value="UniProtKB"/>
</dbReference>
<dbReference type="GO" id="GO:0000226">
    <property type="term" value="P:microtubule cytoskeleton organization"/>
    <property type="evidence" value="ECO:0000266"/>
    <property type="project" value="RGD"/>
</dbReference>
<dbReference type="GO" id="GO:0000070">
    <property type="term" value="P:mitotic sister chromatid segregation"/>
    <property type="evidence" value="ECO:0000250"/>
    <property type="project" value="UniProtKB"/>
</dbReference>
<dbReference type="GO" id="GO:0051988">
    <property type="term" value="P:regulation of attachment of spindle microtubules to kinetochore"/>
    <property type="evidence" value="ECO:0000250"/>
    <property type="project" value="UniProtKB"/>
</dbReference>
<dbReference type="GO" id="GO:0007051">
    <property type="term" value="P:spindle organization"/>
    <property type="evidence" value="ECO:0000250"/>
    <property type="project" value="UniProtKB"/>
</dbReference>
<dbReference type="InterPro" id="IPR033373">
    <property type="entry name" value="SKAP"/>
</dbReference>
<dbReference type="PANTHER" id="PTHR31940">
    <property type="entry name" value="SMALL KINETOCHORE-ASSOCIATED PROTEIN"/>
    <property type="match status" value="1"/>
</dbReference>
<dbReference type="PANTHER" id="PTHR31940:SF2">
    <property type="entry name" value="SMALL KINETOCHORE-ASSOCIATED PROTEIN"/>
    <property type="match status" value="1"/>
</dbReference>
<organism>
    <name type="scientific">Rattus norvegicus</name>
    <name type="common">Rat</name>
    <dbReference type="NCBI Taxonomy" id="10116"/>
    <lineage>
        <taxon>Eukaryota</taxon>
        <taxon>Metazoa</taxon>
        <taxon>Chordata</taxon>
        <taxon>Craniata</taxon>
        <taxon>Vertebrata</taxon>
        <taxon>Euteleostomi</taxon>
        <taxon>Mammalia</taxon>
        <taxon>Eutheria</taxon>
        <taxon>Euarchontoglires</taxon>
        <taxon>Glires</taxon>
        <taxon>Rodentia</taxon>
        <taxon>Myomorpha</taxon>
        <taxon>Muroidea</taxon>
        <taxon>Muridae</taxon>
        <taxon>Murinae</taxon>
        <taxon>Rattus</taxon>
    </lineage>
</organism>
<name>SKAP_RAT</name>
<accession>Q6AXN6</accession>
<sequence>MATHKAEAQETDFRTTGPPTDLEQCPFPPSSRKFPFESVAADSTEGWAVAAEHHLKRSGEDGGWEQPASGVEPSRPTTMASSKTVCDAQPHSMPSCGLSADTQTRATSKLPVKSKDAEMLRHLHTGGLEPDVTKVTKPRRENGQGKAAETASRRNIRSSYKPLSKQKPEEDLKDKNELLEAVNKQLHQKLTETQGELKDLTQKVELLEKFQDNCLAILESKGLNSGQETQESKQEPSTDPTDSMLLLETLKDELKLFNETAKKQMEELQALKVKLKLKEKERIQFLEQQTLGKDEASDFTIILEEMEQLLEM</sequence>
<keyword id="KW-0131">Cell cycle</keyword>
<keyword id="KW-0132">Cell division</keyword>
<keyword id="KW-0137">Centromere</keyword>
<keyword id="KW-0158">Chromosome</keyword>
<keyword id="KW-0175">Coiled coil</keyword>
<keyword id="KW-0963">Cytoplasm</keyword>
<keyword id="KW-0206">Cytoskeleton</keyword>
<keyword id="KW-0995">Kinetochore</keyword>
<keyword id="KW-0493">Microtubule</keyword>
<keyword id="KW-0498">Mitosis</keyword>
<keyword id="KW-0539">Nucleus</keyword>
<keyword id="KW-1185">Reference proteome</keyword>
<reference key="1">
    <citation type="journal article" date="2004" name="Genome Res.">
        <title>The status, quality, and expansion of the NIH full-length cDNA project: the Mammalian Gene Collection (MGC).</title>
        <authorList>
            <consortium name="The MGC Project Team"/>
        </authorList>
    </citation>
    <scope>NUCLEOTIDE SEQUENCE [LARGE SCALE MRNA]</scope>
    <source>
        <tissue>Testis</tissue>
    </source>
</reference>
<feature type="chain" id="PRO_0000274514" description="Small kinetochore-associated protein">
    <location>
        <begin position="1"/>
        <end position="312"/>
    </location>
</feature>
<feature type="region of interest" description="Disordered" evidence="3">
    <location>
        <begin position="1"/>
        <end position="32"/>
    </location>
</feature>
<feature type="region of interest" description="Disordered" evidence="3">
    <location>
        <begin position="55"/>
        <end position="176"/>
    </location>
</feature>
<feature type="region of interest" description="Interaction with SPAG5" evidence="1">
    <location>
        <begin position="156"/>
        <end position="312"/>
    </location>
</feature>
<feature type="region of interest" description="Disordered" evidence="3">
    <location>
        <begin position="221"/>
        <end position="242"/>
    </location>
</feature>
<feature type="coiled-coil region" evidence="2">
    <location>
        <begin position="169"/>
        <end position="210"/>
    </location>
</feature>
<feature type="coiled-coil region" evidence="2">
    <location>
        <begin position="246"/>
        <end position="288"/>
    </location>
</feature>
<feature type="compositionally biased region" description="Basic and acidic residues" evidence="3">
    <location>
        <begin position="1"/>
        <end position="13"/>
    </location>
</feature>
<feature type="compositionally biased region" description="Polar residues" evidence="3">
    <location>
        <begin position="75"/>
        <end position="84"/>
    </location>
</feature>
<feature type="compositionally biased region" description="Basic and acidic residues" evidence="3">
    <location>
        <begin position="131"/>
        <end position="143"/>
    </location>
</feature>
<feature type="compositionally biased region" description="Basic and acidic residues" evidence="3">
    <location>
        <begin position="166"/>
        <end position="176"/>
    </location>
</feature>
<gene>
    <name type="primary">Knstrn</name>
    <name type="synonym">Skap</name>
    <name type="synonym">Traf4af1</name>
</gene>